<name>HXD11_CHICK</name>
<keyword id="KW-0217">Developmental protein</keyword>
<keyword id="KW-0238">DNA-binding</keyword>
<keyword id="KW-0371">Homeobox</keyword>
<keyword id="KW-0539">Nucleus</keyword>
<keyword id="KW-1185">Reference proteome</keyword>
<keyword id="KW-0804">Transcription</keyword>
<keyword id="KW-0805">Transcription regulation</keyword>
<reference key="1">
    <citation type="journal article" date="1992" name="Dev. Dyn.">
        <title>The pattern of expression of the chicken homolog of HOX1I in the developing limb suggests a possible role in the ectodermal inhibition of chondrogenesis.</title>
        <authorList>
            <person name="Rogina B."/>
            <person name="Coelho C.N."/>
            <person name="Kosher R.A."/>
            <person name="Upholt W.B."/>
        </authorList>
    </citation>
    <scope>NUCLEOTIDE SEQUENCE [MRNA]</scope>
</reference>
<reference key="2">
    <citation type="submission" date="1992-02" db="EMBL/GenBank/DDBJ databases">
        <authorList>
            <person name="Nohno T."/>
        </authorList>
    </citation>
    <scope>NUCLEOTIDE SEQUENCE OF 181-280</scope>
</reference>
<reference key="3">
    <citation type="journal article" date="1991" name="Cell">
        <title>Involvement of the Chox-4 chicken homeobox genes in determination of anteroposterior axial polarity during limb development.</title>
        <authorList>
            <person name="Nohno T."/>
            <person name="Noji S."/>
            <person name="Koyama E."/>
            <person name="Ohyama K."/>
            <person name="Myokai F."/>
            <person name="Kuroiwa A."/>
            <person name="Saito T."/>
            <person name="Taniguchi S."/>
        </authorList>
    </citation>
    <scope>NUCLEOTIDE SEQUENCE [GENOMIC DNA] OF 208-268</scope>
</reference>
<reference key="4">
    <citation type="journal article" date="1991" name="Nature">
        <title>Expression of the homeobox Hox-4 genes and the specification of position in chick wing development.</title>
        <authorList>
            <person name="Izpisua-Belmonte J.-C."/>
            <person name="Tickle C."/>
            <person name="Dolle P."/>
            <person name="Wolpert L."/>
            <person name="Duboule D."/>
        </authorList>
    </citation>
    <scope>NUCLEOTIDE SEQUENCE OF 208-267</scope>
</reference>
<feature type="chain" id="PRO_0000200233" description="Homeobox protein Hox-D11">
    <location>
        <begin position="1"/>
        <end position="280"/>
    </location>
</feature>
<feature type="DNA-binding region" description="Homeobox" evidence="1">
    <location>
        <begin position="208"/>
        <end position="267"/>
    </location>
</feature>
<feature type="region of interest" description="Disordered" evidence="2">
    <location>
        <begin position="135"/>
        <end position="211"/>
    </location>
</feature>
<feature type="compositionally biased region" description="Basic and acidic residues" evidence="2">
    <location>
        <begin position="152"/>
        <end position="165"/>
    </location>
</feature>
<feature type="sequence conflict" description="In Ref. 2." evidence="3" ref="2">
    <original>VTTASGAASPPGEAVAEKSN</original>
    <variation>SSSQPSAVVFCINQHFLSLI</variation>
    <location>
        <begin position="181"/>
        <end position="200"/>
    </location>
</feature>
<dbReference type="EMBL" id="M81249">
    <property type="protein sequence ID" value="AAA48822.1"/>
    <property type="molecule type" value="mRNA"/>
</dbReference>
<dbReference type="EMBL" id="D10288">
    <property type="protein sequence ID" value="BAA01133.1"/>
    <property type="molecule type" value="Genomic_DNA"/>
</dbReference>
<dbReference type="PIR" id="B37914">
    <property type="entry name" value="B37914"/>
</dbReference>
<dbReference type="RefSeq" id="NP_989951.1">
    <property type="nucleotide sequence ID" value="NM_204620.2"/>
</dbReference>
<dbReference type="SMR" id="P24342"/>
<dbReference type="FunCoup" id="P24342">
    <property type="interactions" value="2"/>
</dbReference>
<dbReference type="STRING" id="9031.ENSGALP00000046110"/>
<dbReference type="PaxDb" id="9031-ENSGALP00000015069"/>
<dbReference type="GeneID" id="395328"/>
<dbReference type="KEGG" id="gga:395328"/>
<dbReference type="CTD" id="3237"/>
<dbReference type="VEuPathDB" id="HostDB:geneid_395328"/>
<dbReference type="eggNOG" id="KOG0487">
    <property type="taxonomic scope" value="Eukaryota"/>
</dbReference>
<dbReference type="HOGENOM" id="CLU_079662_0_0_1"/>
<dbReference type="InParanoid" id="P24342"/>
<dbReference type="OMA" id="CNFFTSV"/>
<dbReference type="OrthoDB" id="6159439at2759"/>
<dbReference type="PhylomeDB" id="P24342"/>
<dbReference type="PRO" id="PR:P24342"/>
<dbReference type="Proteomes" id="UP000000539">
    <property type="component" value="Chromosome 7"/>
</dbReference>
<dbReference type="Bgee" id="ENSGALG00000039629">
    <property type="expression patterns" value="Expressed in colon and 4 other cell types or tissues"/>
</dbReference>
<dbReference type="GO" id="GO:0005654">
    <property type="term" value="C:nucleoplasm"/>
    <property type="evidence" value="ECO:0007669"/>
    <property type="project" value="UniProtKB-ARBA"/>
</dbReference>
<dbReference type="GO" id="GO:0005634">
    <property type="term" value="C:nucleus"/>
    <property type="evidence" value="ECO:0000318"/>
    <property type="project" value="GO_Central"/>
</dbReference>
<dbReference type="GO" id="GO:0000981">
    <property type="term" value="F:DNA-binding transcription factor activity, RNA polymerase II-specific"/>
    <property type="evidence" value="ECO:0000318"/>
    <property type="project" value="GO_Central"/>
</dbReference>
<dbReference type="GO" id="GO:0000978">
    <property type="term" value="F:RNA polymerase II cis-regulatory region sequence-specific DNA binding"/>
    <property type="evidence" value="ECO:0000318"/>
    <property type="project" value="GO_Central"/>
</dbReference>
<dbReference type="GO" id="GO:0060272">
    <property type="term" value="P:embryonic skeletal joint morphogenesis"/>
    <property type="evidence" value="ECO:0000318"/>
    <property type="project" value="GO_Central"/>
</dbReference>
<dbReference type="GO" id="GO:0006357">
    <property type="term" value="P:regulation of transcription by RNA polymerase II"/>
    <property type="evidence" value="ECO:0000318"/>
    <property type="project" value="GO_Central"/>
</dbReference>
<dbReference type="CDD" id="cd00086">
    <property type="entry name" value="homeodomain"/>
    <property type="match status" value="1"/>
</dbReference>
<dbReference type="FunFam" id="1.10.10.60:FF:000166">
    <property type="entry name" value="homeobox protein Hox-C11"/>
    <property type="match status" value="1"/>
</dbReference>
<dbReference type="Gene3D" id="1.10.10.60">
    <property type="entry name" value="Homeodomain-like"/>
    <property type="match status" value="1"/>
</dbReference>
<dbReference type="InterPro" id="IPR021918">
    <property type="entry name" value="DUF3528"/>
</dbReference>
<dbReference type="InterPro" id="IPR001356">
    <property type="entry name" value="HD"/>
</dbReference>
<dbReference type="InterPro" id="IPR020479">
    <property type="entry name" value="HD_metazoa"/>
</dbReference>
<dbReference type="InterPro" id="IPR017970">
    <property type="entry name" value="Homeobox_CS"/>
</dbReference>
<dbReference type="InterPro" id="IPR009057">
    <property type="entry name" value="Homeodomain-like_sf"/>
</dbReference>
<dbReference type="PANTHER" id="PTHR46092">
    <property type="entry name" value="HOMEOBOX PROTEIN HOX-A11-RELATED"/>
    <property type="match status" value="1"/>
</dbReference>
<dbReference type="PANTHER" id="PTHR46092:SF2">
    <property type="entry name" value="HOMEOBOX PROTEIN HOX-D11"/>
    <property type="match status" value="1"/>
</dbReference>
<dbReference type="Pfam" id="PF12045">
    <property type="entry name" value="DUF3528"/>
    <property type="match status" value="1"/>
</dbReference>
<dbReference type="Pfam" id="PF00046">
    <property type="entry name" value="Homeodomain"/>
    <property type="match status" value="1"/>
</dbReference>
<dbReference type="PRINTS" id="PR00024">
    <property type="entry name" value="HOMEOBOX"/>
</dbReference>
<dbReference type="SMART" id="SM00389">
    <property type="entry name" value="HOX"/>
    <property type="match status" value="1"/>
</dbReference>
<dbReference type="SUPFAM" id="SSF46689">
    <property type="entry name" value="Homeodomain-like"/>
    <property type="match status" value="1"/>
</dbReference>
<dbReference type="PROSITE" id="PS00027">
    <property type="entry name" value="HOMEOBOX_1"/>
    <property type="match status" value="1"/>
</dbReference>
<dbReference type="PROSITE" id="PS50071">
    <property type="entry name" value="HOMEOBOX_2"/>
    <property type="match status" value="1"/>
</dbReference>
<accession>P24342</accession>
<accession>Q90780</accession>
<comment type="function">
    <text>Sequence-specific transcription factor which is part of a developmental regulatory system that provides cells with specific positional identities on the anterior-posterior axis.</text>
</comment>
<comment type="subcellular location">
    <subcellularLocation>
        <location>Nucleus</location>
    </subcellularLocation>
</comment>
<comment type="developmental stage">
    <text>Coordinately expressed in partially overlapping domains during wing development.</text>
</comment>
<comment type="similarity">
    <text evidence="3">Belongs to the Abd-B homeobox family.</text>
</comment>
<evidence type="ECO:0000255" key="1">
    <source>
        <dbReference type="PROSITE-ProRule" id="PRU00108"/>
    </source>
</evidence>
<evidence type="ECO:0000256" key="2">
    <source>
        <dbReference type="SAM" id="MobiDB-lite"/>
    </source>
</evidence>
<evidence type="ECO:0000305" key="3"/>
<protein>
    <recommendedName>
        <fullName>Homeobox protein Hox-D11</fullName>
    </recommendedName>
    <alternativeName>
        <fullName>Homeobox protein Hox-4.6</fullName>
        <shortName>Chox-4.6</shortName>
        <shortName>Ghox-4.6</shortName>
    </alternativeName>
    <alternativeName>
        <fullName>Homeobox protein Hox-4E</fullName>
        <shortName>Chox-4E</shortName>
    </alternativeName>
</protein>
<sequence>MTEFDDCSHGASNMYLPGCAYYVSPSDFSTKPSFLSQSSSCQMTFPYSSNLPHVQPVREVAFREYGLERGKWQYRGSYAPYYSAEEVMHRDFLQPANRRTEMLFKTDPVCGHHGASPAASNFYGSVGRNGILPQGFDQFYEPAPAPPYQQHSEGEGDADKGELKPQHSACSKAPSGQEKKVTTASGAASPPGEAVAEKSNSSAVPQRSRKKRCPYTKYQIRELEREFFFNVYINKEKRLQLSRMLNLTDRQVKIWFQNRRMKEKKLNRDRLQYFTGNPLF</sequence>
<organism>
    <name type="scientific">Gallus gallus</name>
    <name type="common">Chicken</name>
    <dbReference type="NCBI Taxonomy" id="9031"/>
    <lineage>
        <taxon>Eukaryota</taxon>
        <taxon>Metazoa</taxon>
        <taxon>Chordata</taxon>
        <taxon>Craniata</taxon>
        <taxon>Vertebrata</taxon>
        <taxon>Euteleostomi</taxon>
        <taxon>Archelosauria</taxon>
        <taxon>Archosauria</taxon>
        <taxon>Dinosauria</taxon>
        <taxon>Saurischia</taxon>
        <taxon>Theropoda</taxon>
        <taxon>Coelurosauria</taxon>
        <taxon>Aves</taxon>
        <taxon>Neognathae</taxon>
        <taxon>Galloanserae</taxon>
        <taxon>Galliformes</taxon>
        <taxon>Phasianidae</taxon>
        <taxon>Phasianinae</taxon>
        <taxon>Gallus</taxon>
    </lineage>
</organism>
<proteinExistence type="evidence at transcript level"/>
<gene>
    <name type="primary">HOXD11</name>
    <name type="synonym">CHOX-4.6</name>
</gene>